<accession>Q2EY15</accession>
<accession>A4FUS8</accession>
<accession>A4FUS9</accession>
<accession>Q2VWP8</accession>
<accession>Q8BJK6</accession>
<accession>Q8BYL5</accession>
<reference evidence="6 9" key="1">
    <citation type="journal article" date="2006" name="Dev. Dyn.">
        <title>Cloning of vertebrate protogenin (Prtg) and comparative expression analysis during axis elongation.</title>
        <authorList>
            <person name="Vesque C."/>
            <person name="Anselme I."/>
            <person name="Couve E."/>
            <person name="Charnay P."/>
            <person name="Schneider-Maunoury S."/>
        </authorList>
    </citation>
    <scope>NUCLEOTIDE SEQUENCE [MRNA]</scope>
    <scope>TISSUE SPECIFICITY</scope>
    <source>
        <strain evidence="9">SWR/J</strain>
        <tissue evidence="5">Embryo</tissue>
    </source>
</reference>
<reference evidence="8" key="2">
    <citation type="submission" date="2004-05" db="EMBL/GenBank/DDBJ databases">
        <title>Shen-Dan is a novel receptor for embryonic stem cells and developing neurons.</title>
        <authorList>
            <person name="Wong Y.-H."/>
            <person name="Chang C."/>
            <person name="Chen P.-H."/>
            <person name="Yu J.-Y."/>
            <person name="Wang Y.-C."/>
            <person name="Lee C.-M."/>
            <person name="Lin W.-J."/>
            <person name="Tsai T.-F."/>
            <person name="Wang A.-G."/>
            <person name="Fann M.-J."/>
        </authorList>
    </citation>
    <scope>NUCLEOTIDE SEQUENCE [MRNA]</scope>
</reference>
<reference evidence="6 11" key="3">
    <citation type="journal article" date="2005" name="Science">
        <title>The transcriptional landscape of the mammalian genome.</title>
        <authorList>
            <person name="Carninci P."/>
            <person name="Kasukawa T."/>
            <person name="Katayama S."/>
            <person name="Gough J."/>
            <person name="Frith M.C."/>
            <person name="Maeda N."/>
            <person name="Oyama R."/>
            <person name="Ravasi T."/>
            <person name="Lenhard B."/>
            <person name="Wells C."/>
            <person name="Kodzius R."/>
            <person name="Shimokawa K."/>
            <person name="Bajic V.B."/>
            <person name="Brenner S.E."/>
            <person name="Batalov S."/>
            <person name="Forrest A.R."/>
            <person name="Zavolan M."/>
            <person name="Davis M.J."/>
            <person name="Wilming L.G."/>
            <person name="Aidinis V."/>
            <person name="Allen J.E."/>
            <person name="Ambesi-Impiombato A."/>
            <person name="Apweiler R."/>
            <person name="Aturaliya R.N."/>
            <person name="Bailey T.L."/>
            <person name="Bansal M."/>
            <person name="Baxter L."/>
            <person name="Beisel K.W."/>
            <person name="Bersano T."/>
            <person name="Bono H."/>
            <person name="Chalk A.M."/>
            <person name="Chiu K.P."/>
            <person name="Choudhary V."/>
            <person name="Christoffels A."/>
            <person name="Clutterbuck D.R."/>
            <person name="Crowe M.L."/>
            <person name="Dalla E."/>
            <person name="Dalrymple B.P."/>
            <person name="de Bono B."/>
            <person name="Della Gatta G."/>
            <person name="di Bernardo D."/>
            <person name="Down T."/>
            <person name="Engstrom P."/>
            <person name="Fagiolini M."/>
            <person name="Faulkner G."/>
            <person name="Fletcher C.F."/>
            <person name="Fukushima T."/>
            <person name="Furuno M."/>
            <person name="Futaki S."/>
            <person name="Gariboldi M."/>
            <person name="Georgii-Hemming P."/>
            <person name="Gingeras T.R."/>
            <person name="Gojobori T."/>
            <person name="Green R.E."/>
            <person name="Gustincich S."/>
            <person name="Harbers M."/>
            <person name="Hayashi Y."/>
            <person name="Hensch T.K."/>
            <person name="Hirokawa N."/>
            <person name="Hill D."/>
            <person name="Huminiecki L."/>
            <person name="Iacono M."/>
            <person name="Ikeo K."/>
            <person name="Iwama A."/>
            <person name="Ishikawa T."/>
            <person name="Jakt M."/>
            <person name="Kanapin A."/>
            <person name="Katoh M."/>
            <person name="Kawasawa Y."/>
            <person name="Kelso J."/>
            <person name="Kitamura H."/>
            <person name="Kitano H."/>
            <person name="Kollias G."/>
            <person name="Krishnan S.P."/>
            <person name="Kruger A."/>
            <person name="Kummerfeld S.K."/>
            <person name="Kurochkin I.V."/>
            <person name="Lareau L.F."/>
            <person name="Lazarevic D."/>
            <person name="Lipovich L."/>
            <person name="Liu J."/>
            <person name="Liuni S."/>
            <person name="McWilliam S."/>
            <person name="Madan Babu M."/>
            <person name="Madera M."/>
            <person name="Marchionni L."/>
            <person name="Matsuda H."/>
            <person name="Matsuzawa S."/>
            <person name="Miki H."/>
            <person name="Mignone F."/>
            <person name="Miyake S."/>
            <person name="Morris K."/>
            <person name="Mottagui-Tabar S."/>
            <person name="Mulder N."/>
            <person name="Nakano N."/>
            <person name="Nakauchi H."/>
            <person name="Ng P."/>
            <person name="Nilsson R."/>
            <person name="Nishiguchi S."/>
            <person name="Nishikawa S."/>
            <person name="Nori F."/>
            <person name="Ohara O."/>
            <person name="Okazaki Y."/>
            <person name="Orlando V."/>
            <person name="Pang K.C."/>
            <person name="Pavan W.J."/>
            <person name="Pavesi G."/>
            <person name="Pesole G."/>
            <person name="Petrovsky N."/>
            <person name="Piazza S."/>
            <person name="Reed J."/>
            <person name="Reid J.F."/>
            <person name="Ring B.Z."/>
            <person name="Ringwald M."/>
            <person name="Rost B."/>
            <person name="Ruan Y."/>
            <person name="Salzberg S.L."/>
            <person name="Sandelin A."/>
            <person name="Schneider C."/>
            <person name="Schoenbach C."/>
            <person name="Sekiguchi K."/>
            <person name="Semple C.A."/>
            <person name="Seno S."/>
            <person name="Sessa L."/>
            <person name="Sheng Y."/>
            <person name="Shibata Y."/>
            <person name="Shimada H."/>
            <person name="Shimada K."/>
            <person name="Silva D."/>
            <person name="Sinclair B."/>
            <person name="Sperling S."/>
            <person name="Stupka E."/>
            <person name="Sugiura K."/>
            <person name="Sultana R."/>
            <person name="Takenaka Y."/>
            <person name="Taki K."/>
            <person name="Tammoja K."/>
            <person name="Tan S.L."/>
            <person name="Tang S."/>
            <person name="Taylor M.S."/>
            <person name="Tegner J."/>
            <person name="Teichmann S.A."/>
            <person name="Ueda H.R."/>
            <person name="van Nimwegen E."/>
            <person name="Verardo R."/>
            <person name="Wei C.L."/>
            <person name="Yagi K."/>
            <person name="Yamanishi H."/>
            <person name="Zabarovsky E."/>
            <person name="Zhu S."/>
            <person name="Zimmer A."/>
            <person name="Hide W."/>
            <person name="Bult C."/>
            <person name="Grimmond S.M."/>
            <person name="Teasdale R.D."/>
            <person name="Liu E.T."/>
            <person name="Brusic V."/>
            <person name="Quackenbush J."/>
            <person name="Wahlestedt C."/>
            <person name="Mattick J.S."/>
            <person name="Hume D.A."/>
            <person name="Kai C."/>
            <person name="Sasaki D."/>
            <person name="Tomaru Y."/>
            <person name="Fukuda S."/>
            <person name="Kanamori-Katayama M."/>
            <person name="Suzuki M."/>
            <person name="Aoki J."/>
            <person name="Arakawa T."/>
            <person name="Iida J."/>
            <person name="Imamura K."/>
            <person name="Itoh M."/>
            <person name="Kato T."/>
            <person name="Kawaji H."/>
            <person name="Kawagashira N."/>
            <person name="Kawashima T."/>
            <person name="Kojima M."/>
            <person name="Kondo S."/>
            <person name="Konno H."/>
            <person name="Nakano K."/>
            <person name="Ninomiya N."/>
            <person name="Nishio T."/>
            <person name="Okada M."/>
            <person name="Plessy C."/>
            <person name="Shibata K."/>
            <person name="Shiraki T."/>
            <person name="Suzuki S."/>
            <person name="Tagami M."/>
            <person name="Waki K."/>
            <person name="Watahiki A."/>
            <person name="Okamura-Oho Y."/>
            <person name="Suzuki H."/>
            <person name="Kawai J."/>
            <person name="Hayashizaki Y."/>
        </authorList>
    </citation>
    <scope>NUCLEOTIDE SEQUENCE [LARGE SCALE MRNA] OF 128-1191</scope>
    <source>
        <strain evidence="11">C57BL/6J</strain>
        <tissue evidence="11">Embryo</tissue>
        <tissue evidence="10">Hypothalamus</tissue>
    </source>
</reference>
<reference evidence="6 7" key="4">
    <citation type="journal article" date="2004" name="Genome Res.">
        <title>The status, quality, and expansion of the NIH full-length cDNA project: the Mammalian Gene Collection (MGC).</title>
        <authorList>
            <consortium name="The MGC Project Team"/>
        </authorList>
    </citation>
    <scope>NUCLEOTIDE SEQUENCE [LARGE SCALE MRNA] OF 129-1191</scope>
</reference>
<comment type="function">
    <text evidence="5">May play a role in anteroposterior axis elongation.</text>
</comment>
<comment type="subcellular location">
    <subcellularLocation>
        <location evidence="1">Membrane</location>
        <topology evidence="1">Single-pass membrane protein</topology>
    </subcellularLocation>
</comment>
<comment type="tissue specificity">
    <text evidence="5">From mid-gastrulation to early somite stages, restricted to posterior neural plate and mesoderm with an anterior limit at the level of the rhombencephalon. Posterior restriction is progressively lost during somitogenesis. Expression is maintained in the neural tube and paraxial mesoderm during this process. As development proceeds, further restricted to the dorsal parts of the spinal cord and somites. In parallel, expression progresses caudally during axis elongation.</text>
</comment>
<comment type="similarity">
    <text evidence="1">Belongs to the immunoglobulin superfamily. DCC family.</text>
</comment>
<comment type="sequence caution" evidence="6">
    <conflict type="erroneous initiation">
        <sequence resource="EMBL-CDS" id="BAC38947"/>
    </conflict>
</comment>
<proteinExistence type="evidence at transcript level"/>
<sequence length="1191" mass="130533">MAPPVRPGMLPLLLLLLLPPLGSVPGVWSFSELFFMKEPQDATVTRKDPVVLDCQAHGEGPIKVTWLKNGAKLSENKRIQVLSNGSLYISEVEGRRGEQSDEGFYQCLAVNKYGAILSQKAHLTLSTISAFEVHPVSTEVHEGGVARFSCKISSTPPAVITWEFNRTALPTTMDRVTALPSGVLQIYDVGPEDAGNYRCVAATIAHKRKSMEASLTIVAANETRSFYMPTIIASPQNVTASLHQTVVLECMATGYPRPIISWSRLDHKSIDVFNTRVLGNGNLIISDVKLQHAGVYVCRATTPGTRNFTVAMATLTVLAPPSFVEWPESLTRPRAGTARFVCQAEGIPSPKMSWLKNGRRIHSNGRIKMYNSKLVINQIIPEDDAIYQCMAENSQGSVLSRARLTVVMSEDRPSAPYNVHAETMSSSAILLAWERPLYNSDKVIAYSVHYMKAEGLNNEEYQVVLGNDTTHYIIDDLEPDSNYTFYIVAYMPLGASQMSDHVTQNTLEDVPLRPPEISLTSRSPTDILVSWLPIPAKYRRGQVVLYRLSFRLSTENAIQVVELPGTVHEYLLEGLKPDSVYLVRITAATRVGLGESSVWTSHRTPKATSVKAPKSPELHLEPLNCTTISVRWLQDTEDPAAIRGYKLFYKEEGQQEHGPIFLDTGDLLYTLSGLDPRRKYHVRLLAYNNMEEGYQADQTVSTPGCVSVRDRMVPPPPPPHHLYAKANTSSSIFLHWRRPAFTTAQVINYTIRCNPVGLQNASLVLYLQTSETHMLVQGLEPNTKYEFAVRLHVDQLSSPWSPVVYHSTLPEAPTGPPVGVKVTLIEDDTALVSWKPPDGPETVVTRYTILYASRKAWIAGEWQVLHREGAITMALLENLVAGNVYIVKISASNEVGEGPFSNSVELAVLPKDASESNQRPKRLDSSNAKVYSGYYHLDQKSMTGIAVGVGIALTCILICVLILIYRSKARKSSASKTAQSGTQPLSQASASVAAGSDMGKNLERATETAESLVPMMPSSFIDAKGGTDLIINSYGPIIKNNTKKKWLFFQDTKKIKVEQTQRRFTQAVCFYQPGTTVLISDEDSPGSPGQTASFPRPFGATALDTEHSANSEGSHETGDSGRFSHESNDEIHLSSVISSTPPTSNPLAGGDSDGDAAPKKHGDPAQPLPAEQTSAPQTSAGLRYAAEGFPV</sequence>
<feature type="signal peptide" evidence="1">
    <location>
        <begin position="1"/>
        <end position="23"/>
    </location>
</feature>
<feature type="chain" id="PRO_5000141192" description="Protogenin" evidence="1">
    <location>
        <begin position="24"/>
        <end position="1191"/>
    </location>
</feature>
<feature type="topological domain" description="Extracellular" evidence="1">
    <location>
        <begin position="24"/>
        <end position="943"/>
    </location>
</feature>
<feature type="transmembrane region" description="Helical" evidence="1">
    <location>
        <begin position="944"/>
        <end position="964"/>
    </location>
</feature>
<feature type="topological domain" description="Cytoplasmic" evidence="1">
    <location>
        <begin position="965"/>
        <end position="1191"/>
    </location>
</feature>
<feature type="domain" description="Ig-like 1" evidence="1">
    <location>
        <begin position="24"/>
        <end position="124"/>
    </location>
</feature>
<feature type="domain" description="Ig-like 2" evidence="1">
    <location>
        <begin position="126"/>
        <end position="216"/>
    </location>
</feature>
<feature type="domain" description="Ig-like 3" evidence="1">
    <location>
        <begin position="229"/>
        <end position="316"/>
    </location>
</feature>
<feature type="domain" description="Ig-like 4" evidence="1">
    <location>
        <begin position="321"/>
        <end position="405"/>
    </location>
</feature>
<feature type="domain" description="Fibronectin type-III 1" evidence="3">
    <location>
        <begin position="415"/>
        <end position="509"/>
    </location>
</feature>
<feature type="domain" description="Fibronectin type-III 2" evidence="3">
    <location>
        <begin position="511"/>
        <end position="607"/>
    </location>
</feature>
<feature type="domain" description="Fibronectin type-III 3" evidence="3">
    <location>
        <begin position="612"/>
        <end position="711"/>
    </location>
</feature>
<feature type="domain" description="Fibronectin type-III 4" evidence="3">
    <location>
        <begin position="718"/>
        <end position="811"/>
    </location>
</feature>
<feature type="domain" description="Fibronectin type-III 5" evidence="3">
    <location>
        <begin position="816"/>
        <end position="911"/>
    </location>
</feature>
<feature type="region of interest" description="Disordered" evidence="4">
    <location>
        <begin position="975"/>
        <end position="1010"/>
    </location>
</feature>
<feature type="region of interest" description="Disordered" evidence="4">
    <location>
        <begin position="1079"/>
        <end position="1191"/>
    </location>
</feature>
<feature type="compositionally biased region" description="Polar residues" evidence="4">
    <location>
        <begin position="977"/>
        <end position="990"/>
    </location>
</feature>
<feature type="compositionally biased region" description="Basic and acidic residues" evidence="4">
    <location>
        <begin position="1104"/>
        <end position="1132"/>
    </location>
</feature>
<feature type="compositionally biased region" description="Polar residues" evidence="4">
    <location>
        <begin position="1135"/>
        <end position="1146"/>
    </location>
</feature>
<feature type="compositionally biased region" description="Polar residues" evidence="4">
    <location>
        <begin position="1171"/>
        <end position="1180"/>
    </location>
</feature>
<feature type="glycosylation site" description="N-linked (GlcNAc...) asparagine" evidence="1">
    <location>
        <position position="237"/>
    </location>
</feature>
<feature type="glycosylation site" description="N-linked (GlcNAc...) asparagine" evidence="1">
    <location>
        <position position="624"/>
    </location>
</feature>
<feature type="disulfide bond" evidence="2">
    <location>
        <begin position="54"/>
        <end position="107"/>
    </location>
</feature>
<feature type="disulfide bond" evidence="2">
    <location>
        <begin position="150"/>
        <end position="199"/>
    </location>
</feature>
<feature type="disulfide bond" evidence="2">
    <location>
        <begin position="250"/>
        <end position="298"/>
    </location>
</feature>
<feature type="disulfide bond" evidence="2">
    <location>
        <begin position="342"/>
        <end position="389"/>
    </location>
</feature>
<feature type="sequence conflict" description="In Ref. 2; AAU05740." evidence="6" ref="2">
    <original>F</original>
    <variation>Y</variation>
    <location>
        <position position="104"/>
    </location>
</feature>
<feature type="sequence conflict" description="In Ref. 2; AAU05740." evidence="6" ref="2">
    <original>Y</original>
    <variation>N</variation>
    <location>
        <position position="113"/>
    </location>
</feature>
<feature type="sequence conflict" description="In Ref. 3; BAC38947." evidence="6" ref="3">
    <original>T</original>
    <variation>N</variation>
    <location>
        <position position="223"/>
    </location>
</feature>
<feature type="sequence conflict" description="In Ref. 3; BAC30243." evidence="6" ref="3">
    <original>Q</original>
    <variation>K</variation>
    <location>
        <position position="768"/>
    </location>
</feature>
<feature type="sequence conflict" description="In Ref. 4; AAI16338." evidence="6" ref="4">
    <original>A</original>
    <variation>P</variation>
    <location>
        <position position="1185"/>
    </location>
</feature>
<evidence type="ECO:0000255" key="1"/>
<evidence type="ECO:0000255" key="2">
    <source>
        <dbReference type="PROSITE-ProRule" id="PRU00114"/>
    </source>
</evidence>
<evidence type="ECO:0000255" key="3">
    <source>
        <dbReference type="PROSITE-ProRule" id="PRU00316"/>
    </source>
</evidence>
<evidence type="ECO:0000256" key="4">
    <source>
        <dbReference type="SAM" id="MobiDB-lite"/>
    </source>
</evidence>
<evidence type="ECO:0000269" key="5">
    <source>
    </source>
</evidence>
<evidence type="ECO:0000305" key="6"/>
<evidence type="ECO:0000312" key="7">
    <source>
        <dbReference type="EMBL" id="AAI16337.1"/>
    </source>
</evidence>
<evidence type="ECO:0000312" key="8">
    <source>
        <dbReference type="EMBL" id="AAU05740.1"/>
    </source>
</evidence>
<evidence type="ECO:0000312" key="9">
    <source>
        <dbReference type="EMBL" id="ABC96181.1"/>
    </source>
</evidence>
<evidence type="ECO:0000312" key="10">
    <source>
        <dbReference type="EMBL" id="BAC30243.1"/>
    </source>
</evidence>
<evidence type="ECO:0000312" key="11">
    <source>
        <dbReference type="EMBL" id="BAC38947.1"/>
    </source>
</evidence>
<evidence type="ECO:0000312" key="12">
    <source>
        <dbReference type="MGI" id="MGI:2444710"/>
    </source>
</evidence>
<keyword id="KW-0217">Developmental protein</keyword>
<keyword id="KW-1015">Disulfide bond</keyword>
<keyword id="KW-0325">Glycoprotein</keyword>
<keyword id="KW-0393">Immunoglobulin domain</keyword>
<keyword id="KW-0472">Membrane</keyword>
<keyword id="KW-1185">Reference proteome</keyword>
<keyword id="KW-0677">Repeat</keyword>
<keyword id="KW-0732">Signal</keyword>
<keyword id="KW-0812">Transmembrane</keyword>
<keyword id="KW-1133">Transmembrane helix</keyword>
<name>PRTG_MOUSE</name>
<gene>
    <name evidence="12" type="primary">Prtg</name>
</gene>
<organism>
    <name type="scientific">Mus musculus</name>
    <name type="common">Mouse</name>
    <dbReference type="NCBI Taxonomy" id="10090"/>
    <lineage>
        <taxon>Eukaryota</taxon>
        <taxon>Metazoa</taxon>
        <taxon>Chordata</taxon>
        <taxon>Craniata</taxon>
        <taxon>Vertebrata</taxon>
        <taxon>Euteleostomi</taxon>
        <taxon>Mammalia</taxon>
        <taxon>Eutheria</taxon>
        <taxon>Euarchontoglires</taxon>
        <taxon>Glires</taxon>
        <taxon>Rodentia</taxon>
        <taxon>Myomorpha</taxon>
        <taxon>Muroidea</taxon>
        <taxon>Muridae</taxon>
        <taxon>Murinae</taxon>
        <taxon>Mus</taxon>
        <taxon>Mus</taxon>
    </lineage>
</organism>
<protein>
    <recommendedName>
        <fullName>Protogenin</fullName>
    </recommendedName>
    <alternativeName>
        <fullName>Protein Shen-Dan</fullName>
    </alternativeName>
</protein>
<dbReference type="EMBL" id="DQ360114">
    <property type="protein sequence ID" value="ABC96181.1"/>
    <property type="molecule type" value="mRNA"/>
</dbReference>
<dbReference type="EMBL" id="AY630257">
    <property type="protein sequence ID" value="AAU05740.1"/>
    <property type="molecule type" value="mRNA"/>
</dbReference>
<dbReference type="EMBL" id="AK039115">
    <property type="protein sequence ID" value="BAC30243.1"/>
    <property type="molecule type" value="mRNA"/>
</dbReference>
<dbReference type="EMBL" id="AK083540">
    <property type="protein sequence ID" value="BAC38947.1"/>
    <property type="status" value="ALT_INIT"/>
    <property type="molecule type" value="mRNA"/>
</dbReference>
<dbReference type="EMBL" id="BC116336">
    <property type="protein sequence ID" value="AAI16337.1"/>
    <property type="molecule type" value="mRNA"/>
</dbReference>
<dbReference type="EMBL" id="BC116337">
    <property type="protein sequence ID" value="AAI16338.1"/>
    <property type="molecule type" value="mRNA"/>
</dbReference>
<dbReference type="CCDS" id="CCDS23331.1"/>
<dbReference type="RefSeq" id="NP_780694.3">
    <property type="nucleotide sequence ID" value="NM_175485.4"/>
</dbReference>
<dbReference type="SMR" id="Q2EY15"/>
<dbReference type="FunCoup" id="Q2EY15">
    <property type="interactions" value="499"/>
</dbReference>
<dbReference type="STRING" id="10090.ENSMUSP00000055815"/>
<dbReference type="GlyCosmos" id="Q2EY15">
    <property type="glycosylation" value="2 sites, No reported glycans"/>
</dbReference>
<dbReference type="GlyGen" id="Q2EY15">
    <property type="glycosylation" value="3 sites"/>
</dbReference>
<dbReference type="iPTMnet" id="Q2EY15"/>
<dbReference type="PhosphoSitePlus" id="Q2EY15"/>
<dbReference type="CPTAC" id="non-CPTAC-3740"/>
<dbReference type="PaxDb" id="10090-ENSMUSP00000055815"/>
<dbReference type="PeptideAtlas" id="Q2EY15"/>
<dbReference type="ProteomicsDB" id="291825"/>
<dbReference type="Antibodypedia" id="52034">
    <property type="antibodies" value="71 antibodies from 12 providers"/>
</dbReference>
<dbReference type="DNASU" id="235472"/>
<dbReference type="Ensembl" id="ENSMUST00000055535.9">
    <property type="protein sequence ID" value="ENSMUSP00000055815.8"/>
    <property type="gene ID" value="ENSMUSG00000036030.10"/>
</dbReference>
<dbReference type="GeneID" id="235472"/>
<dbReference type="KEGG" id="mmu:235472"/>
<dbReference type="UCSC" id="uc009qqh.1">
    <property type="organism name" value="mouse"/>
</dbReference>
<dbReference type="AGR" id="MGI:2444710"/>
<dbReference type="CTD" id="283659"/>
<dbReference type="MGI" id="MGI:2444710">
    <property type="gene designation" value="Prtg"/>
</dbReference>
<dbReference type="VEuPathDB" id="HostDB:ENSMUSG00000036030"/>
<dbReference type="eggNOG" id="KOG4221">
    <property type="taxonomic scope" value="Eukaryota"/>
</dbReference>
<dbReference type="GeneTree" id="ENSGT00940000155943"/>
<dbReference type="HOGENOM" id="CLU_006906_1_0_1"/>
<dbReference type="InParanoid" id="Q2EY15"/>
<dbReference type="OMA" id="AAQIINY"/>
<dbReference type="OrthoDB" id="438268at2759"/>
<dbReference type="PhylomeDB" id="Q2EY15"/>
<dbReference type="TreeFam" id="TF321506"/>
<dbReference type="BioGRID-ORCS" id="235472">
    <property type="hits" value="6 hits in 80 CRISPR screens"/>
</dbReference>
<dbReference type="ChiTaRS" id="Prtg">
    <property type="organism name" value="mouse"/>
</dbReference>
<dbReference type="PRO" id="PR:Q2EY15"/>
<dbReference type="Proteomes" id="UP000000589">
    <property type="component" value="Chromosome 9"/>
</dbReference>
<dbReference type="RNAct" id="Q2EY15">
    <property type="molecule type" value="protein"/>
</dbReference>
<dbReference type="Bgee" id="ENSMUSG00000036030">
    <property type="expression patterns" value="Expressed in primitive streak and 125 other cell types or tissues"/>
</dbReference>
<dbReference type="GO" id="GO:0005886">
    <property type="term" value="C:plasma membrane"/>
    <property type="evidence" value="ECO:0000314"/>
    <property type="project" value="MGI"/>
</dbReference>
<dbReference type="GO" id="GO:0042802">
    <property type="term" value="F:identical protein binding"/>
    <property type="evidence" value="ECO:0000353"/>
    <property type="project" value="MGI"/>
</dbReference>
<dbReference type="GO" id="GO:0038023">
    <property type="term" value="F:signaling receptor activity"/>
    <property type="evidence" value="ECO:0000353"/>
    <property type="project" value="MGI"/>
</dbReference>
<dbReference type="GO" id="GO:0050768">
    <property type="term" value="P:negative regulation of neurogenesis"/>
    <property type="evidence" value="ECO:0000315"/>
    <property type="project" value="MGI"/>
</dbReference>
<dbReference type="CDD" id="cd00063">
    <property type="entry name" value="FN3"/>
    <property type="match status" value="5"/>
</dbReference>
<dbReference type="CDD" id="cd00096">
    <property type="entry name" value="Ig"/>
    <property type="match status" value="2"/>
</dbReference>
<dbReference type="FunFam" id="2.60.40.10:FF:000600">
    <property type="entry name" value="Contactin 2"/>
    <property type="match status" value="1"/>
</dbReference>
<dbReference type="FunFam" id="2.60.40.10:FF:000577">
    <property type="entry name" value="immunoglobulin superfamily DCC subclass member 3"/>
    <property type="match status" value="1"/>
</dbReference>
<dbReference type="FunFam" id="2.60.40.10:FF:000930">
    <property type="entry name" value="immunoglobulin superfamily DCC subclass member 3"/>
    <property type="match status" value="1"/>
</dbReference>
<dbReference type="FunFam" id="2.60.40.10:FF:000828">
    <property type="entry name" value="Protogenin"/>
    <property type="match status" value="1"/>
</dbReference>
<dbReference type="FunFam" id="2.60.40.10:FF:000987">
    <property type="entry name" value="Protogenin"/>
    <property type="match status" value="1"/>
</dbReference>
<dbReference type="FunFam" id="2.60.40.10:FF:000455">
    <property type="entry name" value="Protogenin A"/>
    <property type="match status" value="1"/>
</dbReference>
<dbReference type="FunFam" id="2.60.40.10:FF:000551">
    <property type="entry name" value="Protogenin A"/>
    <property type="match status" value="1"/>
</dbReference>
<dbReference type="FunFam" id="2.60.40.10:FF:000299">
    <property type="entry name" value="protogenin isoform X2"/>
    <property type="match status" value="1"/>
</dbReference>
<dbReference type="FunFam" id="2.60.40.10:FF:000456">
    <property type="entry name" value="protogenin isoform X2"/>
    <property type="match status" value="1"/>
</dbReference>
<dbReference type="Gene3D" id="2.60.40.10">
    <property type="entry name" value="Immunoglobulins"/>
    <property type="match status" value="9"/>
</dbReference>
<dbReference type="InterPro" id="IPR003961">
    <property type="entry name" value="FN3_dom"/>
</dbReference>
<dbReference type="InterPro" id="IPR036116">
    <property type="entry name" value="FN3_sf"/>
</dbReference>
<dbReference type="InterPro" id="IPR007110">
    <property type="entry name" value="Ig-like_dom"/>
</dbReference>
<dbReference type="InterPro" id="IPR036179">
    <property type="entry name" value="Ig-like_dom_sf"/>
</dbReference>
<dbReference type="InterPro" id="IPR013783">
    <property type="entry name" value="Ig-like_fold"/>
</dbReference>
<dbReference type="InterPro" id="IPR013098">
    <property type="entry name" value="Ig_I-set"/>
</dbReference>
<dbReference type="InterPro" id="IPR003599">
    <property type="entry name" value="Ig_sub"/>
</dbReference>
<dbReference type="InterPro" id="IPR003598">
    <property type="entry name" value="Ig_sub2"/>
</dbReference>
<dbReference type="PANTHER" id="PTHR44170">
    <property type="entry name" value="PROTEIN SIDEKICK"/>
    <property type="match status" value="1"/>
</dbReference>
<dbReference type="PANTHER" id="PTHR44170:SF47">
    <property type="entry name" value="PROTOGENIN"/>
    <property type="match status" value="1"/>
</dbReference>
<dbReference type="Pfam" id="PF00041">
    <property type="entry name" value="fn3"/>
    <property type="match status" value="5"/>
</dbReference>
<dbReference type="Pfam" id="PF07679">
    <property type="entry name" value="I-set"/>
    <property type="match status" value="2"/>
</dbReference>
<dbReference type="Pfam" id="PF13927">
    <property type="entry name" value="Ig_3"/>
    <property type="match status" value="2"/>
</dbReference>
<dbReference type="SMART" id="SM00060">
    <property type="entry name" value="FN3"/>
    <property type="match status" value="5"/>
</dbReference>
<dbReference type="SMART" id="SM00409">
    <property type="entry name" value="IG"/>
    <property type="match status" value="4"/>
</dbReference>
<dbReference type="SMART" id="SM00408">
    <property type="entry name" value="IGc2"/>
    <property type="match status" value="4"/>
</dbReference>
<dbReference type="SUPFAM" id="SSF49265">
    <property type="entry name" value="Fibronectin type III"/>
    <property type="match status" value="3"/>
</dbReference>
<dbReference type="SUPFAM" id="SSF48726">
    <property type="entry name" value="Immunoglobulin"/>
    <property type="match status" value="4"/>
</dbReference>
<dbReference type="PROSITE" id="PS50853">
    <property type="entry name" value="FN3"/>
    <property type="match status" value="5"/>
</dbReference>
<dbReference type="PROSITE" id="PS50835">
    <property type="entry name" value="IG_LIKE"/>
    <property type="match status" value="4"/>
</dbReference>